<gene>
    <name evidence="6" type="primary">ELO2</name>
    <name evidence="8" type="ORF">Tc00.1047053506661.20</name>
</gene>
<comment type="function">
    <text evidence="5">Involved in the synthesis of fatty acids (PubMed:37061002). Elongates C10 fatty acids to C14 (PubMed:37061002). Required for the maintenance of the global lipidome profile in this parasite (PubMed:37061002).</text>
</comment>
<comment type="catalytic activity">
    <reaction evidence="2">
        <text>an acyl-CoA + malonyl-CoA + H(+) = a 3-oxoacyl-CoA + CO2 + CoA</text>
        <dbReference type="Rhea" id="RHEA:50252"/>
        <dbReference type="ChEBI" id="CHEBI:15378"/>
        <dbReference type="ChEBI" id="CHEBI:16526"/>
        <dbReference type="ChEBI" id="CHEBI:57287"/>
        <dbReference type="ChEBI" id="CHEBI:57384"/>
        <dbReference type="ChEBI" id="CHEBI:58342"/>
        <dbReference type="ChEBI" id="CHEBI:90726"/>
    </reaction>
    <physiologicalReaction direction="left-to-right" evidence="2">
        <dbReference type="Rhea" id="RHEA:50253"/>
    </physiologicalReaction>
</comment>
<comment type="pathway">
    <text evidence="7">Lipid metabolism; fatty acid biosynthesis.</text>
</comment>
<comment type="subcellular location">
    <subcellularLocation>
        <location evidence="5">Endoplasmic reticulum membrane</location>
        <topology evidence="3">Multi-pass membrane protein</topology>
    </subcellularLocation>
</comment>
<comment type="similarity">
    <text evidence="7">Belongs to the ELO family.</text>
</comment>
<sequence>MFPYVEDYDGYAVKRLMLENVDVLGYLSLGYLALVWKGPAVVRRLNGETNRVSNSGLLRYAIIVWNLLLSAFSFFGMIVVVPAFLTRISQRGMLRALCGNNDEMFYRSSAGFWIGMFVLSKAPELVDTMFLLLQGKTPPFLHWYHHVTVLIFSWHTYCDHTSTMVLFAAMNLTVHFIMYFYFAMCACGFKKTMRKFAPFITMLQILQMVVGSLVTTYSAYKVYTTPEGAAPGCHVSRANARMGVIMYMSYLYLFSEMFLNSYARPKKPVADPTAAGKKV</sequence>
<feature type="chain" id="PRO_0000459369" description="Fatty acid elongase 2">
    <location>
        <begin position="1"/>
        <end position="279"/>
    </location>
</feature>
<feature type="transmembrane region" description="Helical" evidence="3">
    <location>
        <begin position="16"/>
        <end position="36"/>
    </location>
</feature>
<feature type="transmembrane region" description="Helical" evidence="3">
    <location>
        <begin position="61"/>
        <end position="81"/>
    </location>
</feature>
<feature type="transmembrane region" description="Helical" evidence="3">
    <location>
        <begin position="112"/>
        <end position="132"/>
    </location>
</feature>
<feature type="transmembrane region" description="Helical" evidence="3">
    <location>
        <begin position="138"/>
        <end position="158"/>
    </location>
</feature>
<feature type="transmembrane region" description="Helical" evidence="3">
    <location>
        <begin position="164"/>
        <end position="184"/>
    </location>
</feature>
<feature type="transmembrane region" description="Helical" evidence="3">
    <location>
        <begin position="196"/>
        <end position="216"/>
    </location>
</feature>
<feature type="transmembrane region" description="Helical" evidence="3">
    <location>
        <begin position="242"/>
        <end position="262"/>
    </location>
</feature>
<feature type="short sequence motif" description="HxxHH motif" evidence="2">
    <location>
        <begin position="142"/>
        <end position="146"/>
    </location>
</feature>
<feature type="active site" description="Nucleophile" evidence="1">
    <location>
        <position position="145"/>
    </location>
</feature>
<accession>Q4DHY2</accession>
<proteinExistence type="inferred from homology"/>
<reference evidence="9" key="1">
    <citation type="journal article" date="2005" name="Science">
        <title>The genome sequence of Trypanosoma cruzi, etiologic agent of Chagas disease.</title>
        <authorList>
            <person name="El-Sayed N.M.A."/>
            <person name="Myler P.J."/>
            <person name="Bartholomeu D.C."/>
            <person name="Nilsson D."/>
            <person name="Aggarwal G."/>
            <person name="Tran A.-N."/>
            <person name="Ghedin E."/>
            <person name="Worthey E.A."/>
            <person name="Delcher A.L."/>
            <person name="Blandin G."/>
            <person name="Westenberger S.J."/>
            <person name="Caler E."/>
            <person name="Cerqueira G.C."/>
            <person name="Branche C."/>
            <person name="Haas B."/>
            <person name="Anupama A."/>
            <person name="Arner E."/>
            <person name="Aslund L."/>
            <person name="Attipoe P."/>
            <person name="Bontempi E."/>
            <person name="Bringaud F."/>
            <person name="Burton P."/>
            <person name="Cadag E."/>
            <person name="Campbell D.A."/>
            <person name="Carrington M."/>
            <person name="Crabtree J."/>
            <person name="Darban H."/>
            <person name="da Silveira J.F."/>
            <person name="de Jong P."/>
            <person name="Edwards K."/>
            <person name="Englund P.T."/>
            <person name="Fazelina G."/>
            <person name="Feldblyum T."/>
            <person name="Ferella M."/>
            <person name="Frasch A.C."/>
            <person name="Gull K."/>
            <person name="Horn D."/>
            <person name="Hou L."/>
            <person name="Huang Y."/>
            <person name="Kindlund E."/>
            <person name="Klingbeil M."/>
            <person name="Kluge S."/>
            <person name="Koo H."/>
            <person name="Lacerda D."/>
            <person name="Levin M.J."/>
            <person name="Lorenzi H."/>
            <person name="Louie T."/>
            <person name="Machado C.R."/>
            <person name="McCulloch R."/>
            <person name="McKenna A."/>
            <person name="Mizuno Y."/>
            <person name="Mottram J.C."/>
            <person name="Nelson S."/>
            <person name="Ochaya S."/>
            <person name="Osoegawa K."/>
            <person name="Pai G."/>
            <person name="Parsons M."/>
            <person name="Pentony M."/>
            <person name="Pettersson U."/>
            <person name="Pop M."/>
            <person name="Ramirez J.L."/>
            <person name="Rinta J."/>
            <person name="Robertson L."/>
            <person name="Salzberg S.L."/>
            <person name="Sanchez D.O."/>
            <person name="Seyler A."/>
            <person name="Sharma R."/>
            <person name="Shetty J."/>
            <person name="Simpson A.J."/>
            <person name="Sisk E."/>
            <person name="Tammi M.T."/>
            <person name="Tarleton R."/>
            <person name="Teixeira S."/>
            <person name="Van Aken S."/>
            <person name="Vogt C."/>
            <person name="Ward P.N."/>
            <person name="Wickstead B."/>
            <person name="Wortman J."/>
            <person name="White O."/>
            <person name="Fraser C.M."/>
            <person name="Stuart K.D."/>
            <person name="Andersson B."/>
        </authorList>
    </citation>
    <scope>NUCLEOTIDE SEQUENCE [LARGE SCALE GENOMIC DNA]</scope>
    <source>
        <strain evidence="9">CL Brener</strain>
    </source>
</reference>
<reference evidence="7" key="2">
    <citation type="journal article" date="2023" name="J. Biol. Chem.">
        <title>Fatty acid elongases 1-3 have distinct roles in mitochondrial function, growth, and lipid homeostasis in Trypanosoma cruzi.</title>
        <authorList>
            <person name="Pagura L."/>
            <person name="Dumoulin P.C."/>
            <person name="Ellis C.C."/>
            <person name="Mendes M.T."/>
            <person name="Estevao I.L."/>
            <person name="Almeida I.C."/>
            <person name="Burleigh B.A."/>
        </authorList>
    </citation>
    <scope>FUNCTION</scope>
    <scope>SUBCELLULAR LOCATION</scope>
</reference>
<organism evidence="9">
    <name type="scientific">Trypanosoma cruzi (strain CL Brener)</name>
    <dbReference type="NCBI Taxonomy" id="353153"/>
    <lineage>
        <taxon>Eukaryota</taxon>
        <taxon>Discoba</taxon>
        <taxon>Euglenozoa</taxon>
        <taxon>Kinetoplastea</taxon>
        <taxon>Metakinetoplastina</taxon>
        <taxon>Trypanosomatida</taxon>
        <taxon>Trypanosomatidae</taxon>
        <taxon>Trypanosoma</taxon>
        <taxon>Schizotrypanum</taxon>
    </lineage>
</organism>
<name>ELO2_TRYCC</name>
<keyword id="KW-0256">Endoplasmic reticulum</keyword>
<keyword id="KW-0275">Fatty acid biosynthesis</keyword>
<keyword id="KW-0276">Fatty acid metabolism</keyword>
<keyword id="KW-0444">Lipid biosynthesis</keyword>
<keyword id="KW-0443">Lipid metabolism</keyword>
<keyword id="KW-0472">Membrane</keyword>
<keyword id="KW-1185">Reference proteome</keyword>
<keyword id="KW-0808">Transferase</keyword>
<keyword id="KW-0812">Transmembrane</keyword>
<keyword id="KW-1133">Transmembrane helix</keyword>
<protein>
    <recommendedName>
        <fullName evidence="6">Fatty acid elongase 2</fullName>
        <ecNumber evidence="2">2.3.1.-</ecNumber>
    </recommendedName>
    <alternativeName>
        <fullName evidence="4">Elongation of fatty acids protein</fullName>
    </alternativeName>
</protein>
<dbReference type="EC" id="2.3.1.-" evidence="2"/>
<dbReference type="EMBL" id="AAHK01000461">
    <property type="protein sequence ID" value="EAN92120.1"/>
    <property type="molecule type" value="Genomic_DNA"/>
</dbReference>
<dbReference type="RefSeq" id="XP_813971.1">
    <property type="nucleotide sequence ID" value="XM_808878.1"/>
</dbReference>
<dbReference type="SMR" id="Q4DHY2"/>
<dbReference type="FunCoup" id="Q4DHY2">
    <property type="interactions" value="295"/>
</dbReference>
<dbReference type="STRING" id="353153.Q4DHY2"/>
<dbReference type="PaxDb" id="353153-Q4DHY2"/>
<dbReference type="EnsemblProtists" id="EAN92120">
    <property type="protein sequence ID" value="EAN92120"/>
    <property type="gene ID" value="Tc00.1047053506661.20"/>
</dbReference>
<dbReference type="GeneID" id="3545440"/>
<dbReference type="KEGG" id="tcr:506661.20"/>
<dbReference type="eggNOG" id="KOG3072">
    <property type="taxonomic scope" value="Eukaryota"/>
</dbReference>
<dbReference type="InParanoid" id="Q4DHY2"/>
<dbReference type="OMA" id="THGGKNF"/>
<dbReference type="UniPathway" id="UPA00094"/>
<dbReference type="Proteomes" id="UP000002296">
    <property type="component" value="Unassembled WGS sequence"/>
</dbReference>
<dbReference type="GO" id="GO:0005789">
    <property type="term" value="C:endoplasmic reticulum membrane"/>
    <property type="evidence" value="ECO:0007669"/>
    <property type="project" value="UniProtKB-SubCell"/>
</dbReference>
<dbReference type="GO" id="GO:0009922">
    <property type="term" value="F:fatty acid elongase activity"/>
    <property type="evidence" value="ECO:0007669"/>
    <property type="project" value="UniProtKB-EC"/>
</dbReference>
<dbReference type="GO" id="GO:0034625">
    <property type="term" value="P:fatty acid elongation, monounsaturated fatty acid"/>
    <property type="evidence" value="ECO:0007669"/>
    <property type="project" value="TreeGrafter"/>
</dbReference>
<dbReference type="GO" id="GO:0034626">
    <property type="term" value="P:fatty acid elongation, polyunsaturated fatty acid"/>
    <property type="evidence" value="ECO:0007669"/>
    <property type="project" value="TreeGrafter"/>
</dbReference>
<dbReference type="GO" id="GO:0019367">
    <property type="term" value="P:fatty acid elongation, saturated fatty acid"/>
    <property type="evidence" value="ECO:0007669"/>
    <property type="project" value="TreeGrafter"/>
</dbReference>
<dbReference type="GO" id="GO:0030148">
    <property type="term" value="P:sphingolipid biosynthetic process"/>
    <property type="evidence" value="ECO:0007669"/>
    <property type="project" value="TreeGrafter"/>
</dbReference>
<dbReference type="GO" id="GO:0042761">
    <property type="term" value="P:very long-chain fatty acid biosynthetic process"/>
    <property type="evidence" value="ECO:0007669"/>
    <property type="project" value="TreeGrafter"/>
</dbReference>
<dbReference type="InterPro" id="IPR002076">
    <property type="entry name" value="ELO_fam"/>
</dbReference>
<dbReference type="PANTHER" id="PTHR11157:SF161">
    <property type="entry name" value="ELONGATION OF FATTY ACIDS PROTEIN"/>
    <property type="match status" value="1"/>
</dbReference>
<dbReference type="PANTHER" id="PTHR11157">
    <property type="entry name" value="FATTY ACID ACYL TRANSFERASE-RELATED"/>
    <property type="match status" value="1"/>
</dbReference>
<dbReference type="Pfam" id="PF01151">
    <property type="entry name" value="ELO"/>
    <property type="match status" value="1"/>
</dbReference>
<evidence type="ECO:0000250" key="1">
    <source>
        <dbReference type="UniProtKB" id="A1L3X0"/>
    </source>
</evidence>
<evidence type="ECO:0000250" key="2">
    <source>
        <dbReference type="UniProtKB" id="Q57UP7"/>
    </source>
</evidence>
<evidence type="ECO:0000255" key="3"/>
<evidence type="ECO:0000255" key="4">
    <source>
        <dbReference type="RuleBase" id="RU361115"/>
    </source>
</evidence>
<evidence type="ECO:0000269" key="5">
    <source>
    </source>
</evidence>
<evidence type="ECO:0000303" key="6">
    <source>
    </source>
</evidence>
<evidence type="ECO:0000305" key="7"/>
<evidence type="ECO:0000312" key="8">
    <source>
        <dbReference type="EMBL" id="EAN92120.1"/>
    </source>
</evidence>
<evidence type="ECO:0000312" key="9">
    <source>
        <dbReference type="Proteomes" id="UP000002296"/>
    </source>
</evidence>